<proteinExistence type="inferred from homology"/>
<reference key="1">
    <citation type="journal article" date="1992" name="J. Bacteriol.">
        <title>A lipoprotein of Yersinia enterocolitica facilitates ferrioxamine uptake in Escherichia coli.</title>
        <authorList>
            <person name="Baeumler A.J."/>
            <person name="Hantke K."/>
        </authorList>
    </citation>
    <scope>NUCLEOTIDE SEQUENCE [GENOMIC DNA]</scope>
    <source>
        <strain>ATCC 51872 / WA-C / Serotype O:8</strain>
    </source>
</reference>
<organism>
    <name type="scientific">Yersinia enterocolitica</name>
    <dbReference type="NCBI Taxonomy" id="630"/>
    <lineage>
        <taxon>Bacteria</taxon>
        <taxon>Pseudomonadati</taxon>
        <taxon>Pseudomonadota</taxon>
        <taxon>Gammaproteobacteria</taxon>
        <taxon>Enterobacterales</taxon>
        <taxon>Yersiniaceae</taxon>
        <taxon>Yersinia</taxon>
    </lineage>
</organism>
<feature type="chain" id="PRO_0000214825" description="Uncharacterized anhydro-N-acetylmuramic acid kinase-like protein">
    <location>
        <begin position="1"/>
        <end position="271"/>
    </location>
</feature>
<protein>
    <recommendedName>
        <fullName>Uncharacterized anhydro-N-acetylmuramic acid kinase-like protein</fullName>
    </recommendedName>
</protein>
<name>YPCP_YEREN</name>
<comment type="similarity">
    <text evidence="1">Belongs to the anhydro-N-acetylmuramic acid kinase family.</text>
</comment>
<accession>P31485</accession>
<evidence type="ECO:0000305" key="1"/>
<sequence>MGNKVIAMKSGRFIGVMSGTSLDGIDVVLAAIDERMVAQQASYCHPMPLQLKKDILGMCQGQSTTLSAVGKLESQLGILFAEAVLALLAKAGLTAQDITAIGCHGQTVWHEPLGEPAFTMQLGDNNRIAAMTKIATVGDFRRRDMAYGGQGAPLVPAFHHALLAHSTERRMVLNIGGIANLSMLLPDLPVRGFDTGPGNMLMDAWIWRNRSLPYDKDNEMDAPTFTASECLNVSVKTQKKERPHESIYSWYRLGKKCFPASWCRLQRSNCS</sequence>
<dbReference type="EMBL" id="X60448">
    <property type="protein sequence ID" value="CAA42976.1"/>
    <property type="molecule type" value="Genomic_DNA"/>
</dbReference>
<dbReference type="PIR" id="S23786">
    <property type="entry name" value="S23786"/>
</dbReference>
<dbReference type="SMR" id="P31485"/>
<dbReference type="STRING" id="1443113.LC20_02894"/>
<dbReference type="eggNOG" id="COG2377">
    <property type="taxonomic scope" value="Bacteria"/>
</dbReference>
<dbReference type="GO" id="GO:0005524">
    <property type="term" value="F:ATP binding"/>
    <property type="evidence" value="ECO:0007669"/>
    <property type="project" value="InterPro"/>
</dbReference>
<dbReference type="GO" id="GO:0016773">
    <property type="term" value="F:phosphotransferase activity, alcohol group as acceptor"/>
    <property type="evidence" value="ECO:0007669"/>
    <property type="project" value="InterPro"/>
</dbReference>
<dbReference type="GO" id="GO:0006040">
    <property type="term" value="P:amino sugar metabolic process"/>
    <property type="evidence" value="ECO:0007669"/>
    <property type="project" value="InterPro"/>
</dbReference>
<dbReference type="GO" id="GO:0009254">
    <property type="term" value="P:peptidoglycan turnover"/>
    <property type="evidence" value="ECO:0007669"/>
    <property type="project" value="InterPro"/>
</dbReference>
<dbReference type="Gene3D" id="3.30.420.40">
    <property type="match status" value="1"/>
</dbReference>
<dbReference type="InterPro" id="IPR005338">
    <property type="entry name" value="Anhydro_N_Ac-Mur_kinase"/>
</dbReference>
<dbReference type="InterPro" id="IPR043129">
    <property type="entry name" value="ATPase_NBD"/>
</dbReference>
<dbReference type="PANTHER" id="PTHR30605">
    <property type="entry name" value="ANHYDRO-N-ACETYLMURAMIC ACID KINASE"/>
    <property type="match status" value="1"/>
</dbReference>
<dbReference type="PANTHER" id="PTHR30605:SF0">
    <property type="entry name" value="ANHYDRO-N-ACETYLMURAMIC ACID KINASE"/>
    <property type="match status" value="1"/>
</dbReference>
<dbReference type="Pfam" id="PF03702">
    <property type="entry name" value="AnmK"/>
    <property type="match status" value="1"/>
</dbReference>
<dbReference type="SUPFAM" id="SSF53067">
    <property type="entry name" value="Actin-like ATPase domain"/>
    <property type="match status" value="1"/>
</dbReference>